<evidence type="ECO:0000255" key="1">
    <source>
        <dbReference type="HAMAP-Rule" id="MF_01320"/>
    </source>
</evidence>
<evidence type="ECO:0000256" key="2">
    <source>
        <dbReference type="SAM" id="MobiDB-lite"/>
    </source>
</evidence>
<evidence type="ECO:0000305" key="3"/>
<keyword id="KW-0687">Ribonucleoprotein</keyword>
<keyword id="KW-0689">Ribosomal protein</keyword>
<keyword id="KW-0694">RNA-binding</keyword>
<keyword id="KW-0699">rRNA-binding</keyword>
<dbReference type="EMBL" id="CP001172">
    <property type="protein sequence ID" value="ACJ57882.1"/>
    <property type="molecule type" value="Genomic_DNA"/>
</dbReference>
<dbReference type="RefSeq" id="WP_001122317.1">
    <property type="nucleotide sequence ID" value="NZ_CP001172.1"/>
</dbReference>
<dbReference type="SMR" id="B7GW05"/>
<dbReference type="HOGENOM" id="CLU_036235_2_1_6"/>
<dbReference type="Proteomes" id="UP000006924">
    <property type="component" value="Chromosome"/>
</dbReference>
<dbReference type="GO" id="GO:0015934">
    <property type="term" value="C:large ribosomal subunit"/>
    <property type="evidence" value="ECO:0007669"/>
    <property type="project" value="InterPro"/>
</dbReference>
<dbReference type="GO" id="GO:0019843">
    <property type="term" value="F:rRNA binding"/>
    <property type="evidence" value="ECO:0007669"/>
    <property type="project" value="UniProtKB-UniRule"/>
</dbReference>
<dbReference type="GO" id="GO:0003735">
    <property type="term" value="F:structural constituent of ribosome"/>
    <property type="evidence" value="ECO:0007669"/>
    <property type="project" value="InterPro"/>
</dbReference>
<dbReference type="GO" id="GO:0016740">
    <property type="term" value="F:transferase activity"/>
    <property type="evidence" value="ECO:0007669"/>
    <property type="project" value="InterPro"/>
</dbReference>
<dbReference type="GO" id="GO:0002181">
    <property type="term" value="P:cytoplasmic translation"/>
    <property type="evidence" value="ECO:0007669"/>
    <property type="project" value="TreeGrafter"/>
</dbReference>
<dbReference type="FunFam" id="2.30.30.30:FF:000001">
    <property type="entry name" value="50S ribosomal protein L2"/>
    <property type="match status" value="1"/>
</dbReference>
<dbReference type="FunFam" id="2.40.50.140:FF:000003">
    <property type="entry name" value="50S ribosomal protein L2"/>
    <property type="match status" value="1"/>
</dbReference>
<dbReference type="FunFam" id="4.10.950.10:FF:000001">
    <property type="entry name" value="50S ribosomal protein L2"/>
    <property type="match status" value="1"/>
</dbReference>
<dbReference type="Gene3D" id="2.30.30.30">
    <property type="match status" value="1"/>
</dbReference>
<dbReference type="Gene3D" id="2.40.50.140">
    <property type="entry name" value="Nucleic acid-binding proteins"/>
    <property type="match status" value="1"/>
</dbReference>
<dbReference type="Gene3D" id="4.10.950.10">
    <property type="entry name" value="Ribosomal protein L2, domain 3"/>
    <property type="match status" value="1"/>
</dbReference>
<dbReference type="HAMAP" id="MF_01320_B">
    <property type="entry name" value="Ribosomal_uL2_B"/>
    <property type="match status" value="1"/>
</dbReference>
<dbReference type="InterPro" id="IPR012340">
    <property type="entry name" value="NA-bd_OB-fold"/>
</dbReference>
<dbReference type="InterPro" id="IPR014722">
    <property type="entry name" value="Rib_uL2_dom2"/>
</dbReference>
<dbReference type="InterPro" id="IPR002171">
    <property type="entry name" value="Ribosomal_uL2"/>
</dbReference>
<dbReference type="InterPro" id="IPR005880">
    <property type="entry name" value="Ribosomal_uL2_bac/org-type"/>
</dbReference>
<dbReference type="InterPro" id="IPR022669">
    <property type="entry name" value="Ribosomal_uL2_C"/>
</dbReference>
<dbReference type="InterPro" id="IPR014726">
    <property type="entry name" value="Ribosomal_uL2_dom3"/>
</dbReference>
<dbReference type="InterPro" id="IPR022666">
    <property type="entry name" value="Ribosomal_uL2_RNA-bd_dom"/>
</dbReference>
<dbReference type="InterPro" id="IPR008991">
    <property type="entry name" value="Translation_prot_SH3-like_sf"/>
</dbReference>
<dbReference type="NCBIfam" id="TIGR01171">
    <property type="entry name" value="rplB_bact"/>
    <property type="match status" value="1"/>
</dbReference>
<dbReference type="PANTHER" id="PTHR13691:SF5">
    <property type="entry name" value="LARGE RIBOSOMAL SUBUNIT PROTEIN UL2M"/>
    <property type="match status" value="1"/>
</dbReference>
<dbReference type="PANTHER" id="PTHR13691">
    <property type="entry name" value="RIBOSOMAL PROTEIN L2"/>
    <property type="match status" value="1"/>
</dbReference>
<dbReference type="Pfam" id="PF00181">
    <property type="entry name" value="Ribosomal_L2"/>
    <property type="match status" value="1"/>
</dbReference>
<dbReference type="Pfam" id="PF03947">
    <property type="entry name" value="Ribosomal_L2_C"/>
    <property type="match status" value="1"/>
</dbReference>
<dbReference type="PIRSF" id="PIRSF002158">
    <property type="entry name" value="Ribosomal_L2"/>
    <property type="match status" value="1"/>
</dbReference>
<dbReference type="SMART" id="SM01383">
    <property type="entry name" value="Ribosomal_L2"/>
    <property type="match status" value="1"/>
</dbReference>
<dbReference type="SMART" id="SM01382">
    <property type="entry name" value="Ribosomal_L2_C"/>
    <property type="match status" value="1"/>
</dbReference>
<dbReference type="SUPFAM" id="SSF50249">
    <property type="entry name" value="Nucleic acid-binding proteins"/>
    <property type="match status" value="1"/>
</dbReference>
<dbReference type="SUPFAM" id="SSF50104">
    <property type="entry name" value="Translation proteins SH3-like domain"/>
    <property type="match status" value="1"/>
</dbReference>
<comment type="function">
    <text evidence="1">One of the primary rRNA binding proteins. Required for association of the 30S and 50S subunits to form the 70S ribosome, for tRNA binding and peptide bond formation. It has been suggested to have peptidyltransferase activity; this is somewhat controversial. Makes several contacts with the 16S rRNA in the 70S ribosome.</text>
</comment>
<comment type="subunit">
    <text evidence="1">Part of the 50S ribosomal subunit. Forms a bridge to the 30S subunit in the 70S ribosome.</text>
</comment>
<comment type="similarity">
    <text evidence="1">Belongs to the universal ribosomal protein uL2 family.</text>
</comment>
<name>RL2_ACIB3</name>
<accession>B7GW05</accession>
<reference key="1">
    <citation type="journal article" date="2008" name="J. Bacteriol.">
        <title>Comparative genome sequence analysis of multidrug-resistant Acinetobacter baumannii.</title>
        <authorList>
            <person name="Adams M.D."/>
            <person name="Goglin K."/>
            <person name="Molyneaux N."/>
            <person name="Hujer K.M."/>
            <person name="Lavender H."/>
            <person name="Jamison J.J."/>
            <person name="MacDonald I.J."/>
            <person name="Martin K.M."/>
            <person name="Russo T."/>
            <person name="Campagnari A.A."/>
            <person name="Hujer A.M."/>
            <person name="Bonomo R.A."/>
            <person name="Gill S.R."/>
        </authorList>
    </citation>
    <scope>NUCLEOTIDE SEQUENCE [LARGE SCALE GENOMIC DNA]</scope>
    <source>
        <strain>AB307-0294</strain>
    </source>
</reference>
<feature type="chain" id="PRO_1000141489" description="Large ribosomal subunit protein uL2">
    <location>
        <begin position="1"/>
        <end position="274"/>
    </location>
</feature>
<feature type="region of interest" description="Disordered" evidence="2">
    <location>
        <begin position="38"/>
        <end position="57"/>
    </location>
</feature>
<feature type="region of interest" description="Disordered" evidence="2">
    <location>
        <begin position="224"/>
        <end position="256"/>
    </location>
</feature>
<feature type="compositionally biased region" description="Basic and acidic residues" evidence="2">
    <location>
        <begin position="229"/>
        <end position="239"/>
    </location>
</feature>
<organism>
    <name type="scientific">Acinetobacter baumannii (strain AB307-0294)</name>
    <dbReference type="NCBI Taxonomy" id="557600"/>
    <lineage>
        <taxon>Bacteria</taxon>
        <taxon>Pseudomonadati</taxon>
        <taxon>Pseudomonadota</taxon>
        <taxon>Gammaproteobacteria</taxon>
        <taxon>Moraxellales</taxon>
        <taxon>Moraxellaceae</taxon>
        <taxon>Acinetobacter</taxon>
        <taxon>Acinetobacter calcoaceticus/baumannii complex</taxon>
    </lineage>
</organism>
<proteinExistence type="inferred from homology"/>
<gene>
    <name evidence="1" type="primary">rplB</name>
    <name type="ordered locus">ABBFA_000435</name>
</gene>
<sequence>MPIQKCKPTSPGRRFVEKVVHDHLHKGAPYAPLVEAKKRTGGRNNNGHITTRHVGGGHKQHYRIVDFKRNKDGVPAVVERIEYDPNRTAHIALLKYADGERRYIIAPKGLRAGDKVQSGNDAPIRPGNCLPLRNMPIGSTLHNVELKIGKGAQLARSAGASVQLLGRDGSYAIIRLRSGEMRKVHVECRAVIGEVSNQENNLRSLGKAGAARWRGVRPTVRGMAMNPIDHPHGGGEGRNKGIQPVSPWGQKAKGYKTRTNKRTTKMIIRDRRVK</sequence>
<protein>
    <recommendedName>
        <fullName evidence="1">Large ribosomal subunit protein uL2</fullName>
    </recommendedName>
    <alternativeName>
        <fullName evidence="3">50S ribosomal protein L2</fullName>
    </alternativeName>
</protein>